<sequence length="172" mass="19130">MNLKEHIRVIENFPKEGISFKDVTTILQDGKVLNYTIDKLAENLKDKKIDKIVGPEARGFLFGTPLAYKLGVGFVPVRKKGKLPYETISCKYDLEYGQDELQIHKDSIKKGDKVAIVDDLLATGGTIASVVKLVEELGGEVVNVSFVIELTDLKGKDKLEGYDINSLVQYNI</sequence>
<gene>
    <name evidence="1" type="primary">apt</name>
    <name type="ordered locus">CBO3060</name>
    <name type="ordered locus">CLC_2962</name>
</gene>
<accession>A5I6E1</accession>
<accession>A7G7M4</accession>
<dbReference type="EC" id="2.4.2.7" evidence="1"/>
<dbReference type="EMBL" id="CP000727">
    <property type="protein sequence ID" value="ABS36970.1"/>
    <property type="molecule type" value="Genomic_DNA"/>
</dbReference>
<dbReference type="EMBL" id="AM412317">
    <property type="protein sequence ID" value="CAL84623.1"/>
    <property type="molecule type" value="Genomic_DNA"/>
</dbReference>
<dbReference type="RefSeq" id="WP_003357763.1">
    <property type="nucleotide sequence ID" value="NC_009698.1"/>
</dbReference>
<dbReference type="RefSeq" id="YP_001255552.1">
    <property type="nucleotide sequence ID" value="NC_009495.1"/>
</dbReference>
<dbReference type="RefSeq" id="YP_001388789.1">
    <property type="nucleotide sequence ID" value="NC_009698.1"/>
</dbReference>
<dbReference type="SMR" id="A5I6E1"/>
<dbReference type="GeneID" id="5186844"/>
<dbReference type="KEGG" id="cbh:CLC_2962"/>
<dbReference type="KEGG" id="cbo:CBO3060"/>
<dbReference type="PATRIC" id="fig|413999.7.peg.3038"/>
<dbReference type="HOGENOM" id="CLU_063339_3_0_9"/>
<dbReference type="UniPathway" id="UPA00588">
    <property type="reaction ID" value="UER00646"/>
</dbReference>
<dbReference type="PRO" id="PR:A5I6E1"/>
<dbReference type="Proteomes" id="UP000001986">
    <property type="component" value="Chromosome"/>
</dbReference>
<dbReference type="GO" id="GO:0005737">
    <property type="term" value="C:cytoplasm"/>
    <property type="evidence" value="ECO:0000318"/>
    <property type="project" value="GO_Central"/>
</dbReference>
<dbReference type="GO" id="GO:0002055">
    <property type="term" value="F:adenine binding"/>
    <property type="evidence" value="ECO:0000318"/>
    <property type="project" value="GO_Central"/>
</dbReference>
<dbReference type="GO" id="GO:0003999">
    <property type="term" value="F:adenine phosphoribosyltransferase activity"/>
    <property type="evidence" value="ECO:0000318"/>
    <property type="project" value="GO_Central"/>
</dbReference>
<dbReference type="GO" id="GO:0016208">
    <property type="term" value="F:AMP binding"/>
    <property type="evidence" value="ECO:0000318"/>
    <property type="project" value="GO_Central"/>
</dbReference>
<dbReference type="GO" id="GO:0006168">
    <property type="term" value="P:adenine salvage"/>
    <property type="evidence" value="ECO:0000318"/>
    <property type="project" value="GO_Central"/>
</dbReference>
<dbReference type="GO" id="GO:0044209">
    <property type="term" value="P:AMP salvage"/>
    <property type="evidence" value="ECO:0000318"/>
    <property type="project" value="GO_Central"/>
</dbReference>
<dbReference type="GO" id="GO:0006166">
    <property type="term" value="P:purine ribonucleoside salvage"/>
    <property type="evidence" value="ECO:0007669"/>
    <property type="project" value="UniProtKB-KW"/>
</dbReference>
<dbReference type="CDD" id="cd06223">
    <property type="entry name" value="PRTases_typeI"/>
    <property type="match status" value="1"/>
</dbReference>
<dbReference type="FunFam" id="3.40.50.2020:FF:000004">
    <property type="entry name" value="Adenine phosphoribosyltransferase"/>
    <property type="match status" value="1"/>
</dbReference>
<dbReference type="Gene3D" id="3.40.50.2020">
    <property type="match status" value="1"/>
</dbReference>
<dbReference type="HAMAP" id="MF_00004">
    <property type="entry name" value="Aden_phosphoribosyltr"/>
    <property type="match status" value="1"/>
</dbReference>
<dbReference type="InterPro" id="IPR005764">
    <property type="entry name" value="Ade_phspho_trans"/>
</dbReference>
<dbReference type="InterPro" id="IPR000836">
    <property type="entry name" value="PRibTrfase_dom"/>
</dbReference>
<dbReference type="InterPro" id="IPR029057">
    <property type="entry name" value="PRTase-like"/>
</dbReference>
<dbReference type="InterPro" id="IPR050054">
    <property type="entry name" value="UPRTase/APRTase"/>
</dbReference>
<dbReference type="NCBIfam" id="TIGR01090">
    <property type="entry name" value="apt"/>
    <property type="match status" value="1"/>
</dbReference>
<dbReference type="NCBIfam" id="NF002633">
    <property type="entry name" value="PRK02304.1-2"/>
    <property type="match status" value="1"/>
</dbReference>
<dbReference type="NCBIfam" id="NF002634">
    <property type="entry name" value="PRK02304.1-3"/>
    <property type="match status" value="1"/>
</dbReference>
<dbReference type="NCBIfam" id="NF002636">
    <property type="entry name" value="PRK02304.1-5"/>
    <property type="match status" value="1"/>
</dbReference>
<dbReference type="NCBIfam" id="NF009211">
    <property type="entry name" value="PRK12560.1"/>
    <property type="match status" value="1"/>
</dbReference>
<dbReference type="PANTHER" id="PTHR32315">
    <property type="entry name" value="ADENINE PHOSPHORIBOSYLTRANSFERASE"/>
    <property type="match status" value="1"/>
</dbReference>
<dbReference type="PANTHER" id="PTHR32315:SF3">
    <property type="entry name" value="ADENINE PHOSPHORIBOSYLTRANSFERASE"/>
    <property type="match status" value="1"/>
</dbReference>
<dbReference type="Pfam" id="PF00156">
    <property type="entry name" value="Pribosyltran"/>
    <property type="match status" value="1"/>
</dbReference>
<dbReference type="SUPFAM" id="SSF53271">
    <property type="entry name" value="PRTase-like"/>
    <property type="match status" value="1"/>
</dbReference>
<organism>
    <name type="scientific">Clostridium botulinum (strain Hall / ATCC 3502 / NCTC 13319 / Type A)</name>
    <dbReference type="NCBI Taxonomy" id="441771"/>
    <lineage>
        <taxon>Bacteria</taxon>
        <taxon>Bacillati</taxon>
        <taxon>Bacillota</taxon>
        <taxon>Clostridia</taxon>
        <taxon>Eubacteriales</taxon>
        <taxon>Clostridiaceae</taxon>
        <taxon>Clostridium</taxon>
    </lineage>
</organism>
<reference key="1">
    <citation type="journal article" date="2007" name="Genome Res.">
        <title>Genome sequence of a proteolytic (Group I) Clostridium botulinum strain Hall A and comparative analysis of the clostridial genomes.</title>
        <authorList>
            <person name="Sebaihia M."/>
            <person name="Peck M.W."/>
            <person name="Minton N.P."/>
            <person name="Thomson N.R."/>
            <person name="Holden M.T.G."/>
            <person name="Mitchell W.J."/>
            <person name="Carter A.T."/>
            <person name="Bentley S.D."/>
            <person name="Mason D.R."/>
            <person name="Crossman L."/>
            <person name="Paul C.J."/>
            <person name="Ivens A."/>
            <person name="Wells-Bennik M.H.J."/>
            <person name="Davis I.J."/>
            <person name="Cerdeno-Tarraga A.M."/>
            <person name="Churcher C."/>
            <person name="Quail M.A."/>
            <person name="Chillingworth T."/>
            <person name="Feltwell T."/>
            <person name="Fraser A."/>
            <person name="Goodhead I."/>
            <person name="Hance Z."/>
            <person name="Jagels K."/>
            <person name="Larke N."/>
            <person name="Maddison M."/>
            <person name="Moule S."/>
            <person name="Mungall K."/>
            <person name="Norbertczak H."/>
            <person name="Rabbinowitsch E."/>
            <person name="Sanders M."/>
            <person name="Simmonds M."/>
            <person name="White B."/>
            <person name="Whithead S."/>
            <person name="Parkhill J."/>
        </authorList>
    </citation>
    <scope>NUCLEOTIDE SEQUENCE [LARGE SCALE GENOMIC DNA]</scope>
    <source>
        <strain>Hall / ATCC 3502 / NCTC 13319 / Type A</strain>
    </source>
</reference>
<reference key="2">
    <citation type="journal article" date="2007" name="PLoS ONE">
        <title>Analysis of the neurotoxin complex genes in Clostridium botulinum A1-A4 and B1 strains: BoNT/A3, /Ba4 and /B1 clusters are located within plasmids.</title>
        <authorList>
            <person name="Smith T.J."/>
            <person name="Hill K.K."/>
            <person name="Foley B.T."/>
            <person name="Detter J.C."/>
            <person name="Munk A.C."/>
            <person name="Bruce D.C."/>
            <person name="Doggett N.A."/>
            <person name="Smith L.A."/>
            <person name="Marks J.D."/>
            <person name="Xie G."/>
            <person name="Brettin T.S."/>
        </authorList>
    </citation>
    <scope>NUCLEOTIDE SEQUENCE [LARGE SCALE GENOMIC DNA]</scope>
    <source>
        <strain>Hall / ATCC 3502 / NCTC 13319 / Type A</strain>
    </source>
</reference>
<keyword id="KW-0963">Cytoplasm</keyword>
<keyword id="KW-0328">Glycosyltransferase</keyword>
<keyword id="KW-0660">Purine salvage</keyword>
<keyword id="KW-1185">Reference proteome</keyword>
<keyword id="KW-0808">Transferase</keyword>
<evidence type="ECO:0000255" key="1">
    <source>
        <dbReference type="HAMAP-Rule" id="MF_00004"/>
    </source>
</evidence>
<proteinExistence type="inferred from homology"/>
<name>APT_CLOBH</name>
<feature type="chain" id="PRO_0000329340" description="Adenine phosphoribosyltransferase">
    <location>
        <begin position="1"/>
        <end position="172"/>
    </location>
</feature>
<protein>
    <recommendedName>
        <fullName evidence="1">Adenine phosphoribosyltransferase</fullName>
        <shortName evidence="1">APRT</shortName>
        <ecNumber evidence="1">2.4.2.7</ecNumber>
    </recommendedName>
</protein>
<comment type="function">
    <text evidence="1">Catalyzes a salvage reaction resulting in the formation of AMP, that is energically less costly than de novo synthesis.</text>
</comment>
<comment type="catalytic activity">
    <reaction evidence="1">
        <text>AMP + diphosphate = 5-phospho-alpha-D-ribose 1-diphosphate + adenine</text>
        <dbReference type="Rhea" id="RHEA:16609"/>
        <dbReference type="ChEBI" id="CHEBI:16708"/>
        <dbReference type="ChEBI" id="CHEBI:33019"/>
        <dbReference type="ChEBI" id="CHEBI:58017"/>
        <dbReference type="ChEBI" id="CHEBI:456215"/>
        <dbReference type="EC" id="2.4.2.7"/>
    </reaction>
</comment>
<comment type="pathway">
    <text evidence="1">Purine metabolism; AMP biosynthesis via salvage pathway; AMP from adenine: step 1/1.</text>
</comment>
<comment type="subunit">
    <text evidence="1">Homodimer.</text>
</comment>
<comment type="subcellular location">
    <subcellularLocation>
        <location evidence="1">Cytoplasm</location>
    </subcellularLocation>
</comment>
<comment type="similarity">
    <text evidence="1">Belongs to the purine/pyrimidine phosphoribosyltransferase family.</text>
</comment>